<keyword id="KW-0998">Cell outer membrane</keyword>
<keyword id="KW-0134">Cell wall</keyword>
<keyword id="KW-0472">Membrane</keyword>
<keyword id="KW-1185">Reference proteome</keyword>
<keyword id="KW-0964">Secreted</keyword>
<keyword id="KW-0732">Signal</keyword>
<keyword id="KW-0812">Transmembrane</keyword>
<keyword id="KW-1134">Transmembrane beta strand</keyword>
<organism>
    <name type="scientific">Chlamydia trachomatis serovar D (strain ATCC VR-885 / DSM 19411 / UW-3/Cx)</name>
    <dbReference type="NCBI Taxonomy" id="272561"/>
    <lineage>
        <taxon>Bacteria</taxon>
        <taxon>Pseudomonadati</taxon>
        <taxon>Chlamydiota</taxon>
        <taxon>Chlamydiia</taxon>
        <taxon>Chlamydiales</taxon>
        <taxon>Chlamydiaceae</taxon>
        <taxon>Chlamydia/Chlamydophila group</taxon>
        <taxon>Chlamydia</taxon>
    </lineage>
</organism>
<name>PMPH_CHLTR</name>
<gene>
    <name type="primary">pmpH</name>
    <name type="ordered locus">CT_872</name>
</gene>
<dbReference type="EMBL" id="AE001273">
    <property type="protein sequence ID" value="AAC68470.1"/>
    <property type="molecule type" value="Genomic_DNA"/>
</dbReference>
<dbReference type="PIR" id="H71460">
    <property type="entry name" value="H71460"/>
</dbReference>
<dbReference type="RefSeq" id="NP_220394.1">
    <property type="nucleotide sequence ID" value="NC_000117.1"/>
</dbReference>
<dbReference type="RefSeq" id="WP_010725378.1">
    <property type="nucleotide sequence ID" value="NC_000117.1"/>
</dbReference>
<dbReference type="STRING" id="272561.CT_872"/>
<dbReference type="EnsemblBacteria" id="AAC68470">
    <property type="protein sequence ID" value="AAC68470"/>
    <property type="gene ID" value="CT_872"/>
</dbReference>
<dbReference type="GeneID" id="884673"/>
<dbReference type="KEGG" id="ctr:CT_872"/>
<dbReference type="PATRIC" id="fig|272561.5.peg.963"/>
<dbReference type="HOGENOM" id="CLU_004549_2_0_0"/>
<dbReference type="InParanoid" id="O84880"/>
<dbReference type="OrthoDB" id="18991at2"/>
<dbReference type="Proteomes" id="UP000000431">
    <property type="component" value="Chromosome"/>
</dbReference>
<dbReference type="GO" id="GO:0009279">
    <property type="term" value="C:cell outer membrane"/>
    <property type="evidence" value="ECO:0007669"/>
    <property type="project" value="UniProtKB-SubCell"/>
</dbReference>
<dbReference type="GO" id="GO:0005576">
    <property type="term" value="C:extracellular region"/>
    <property type="evidence" value="ECO:0007669"/>
    <property type="project" value="UniProtKB-KW"/>
</dbReference>
<dbReference type="InterPro" id="IPR005546">
    <property type="entry name" value="Autotransporte_beta"/>
</dbReference>
<dbReference type="InterPro" id="IPR036709">
    <property type="entry name" value="Autotransporte_beta_dom_sf"/>
</dbReference>
<dbReference type="InterPro" id="IPR011427">
    <property type="entry name" value="Polymorphic_membr_middle"/>
</dbReference>
<dbReference type="InterPro" id="IPR003368">
    <property type="entry name" value="POMP_repeat"/>
</dbReference>
<dbReference type="NCBIfam" id="TIGR01376">
    <property type="entry name" value="POMP_repeat"/>
    <property type="match status" value="3"/>
</dbReference>
<dbReference type="Pfam" id="PF02415">
    <property type="entry name" value="Chlam_PMP"/>
    <property type="match status" value="1"/>
</dbReference>
<dbReference type="Pfam" id="PF07548">
    <property type="entry name" value="ChlamPMP_M"/>
    <property type="match status" value="1"/>
</dbReference>
<dbReference type="SMART" id="SM00869">
    <property type="entry name" value="Autotransporter"/>
    <property type="match status" value="1"/>
</dbReference>
<dbReference type="SUPFAM" id="SSF103515">
    <property type="entry name" value="Autotransporter"/>
    <property type="match status" value="1"/>
</dbReference>
<dbReference type="PROSITE" id="PS51208">
    <property type="entry name" value="AUTOTRANSPORTER"/>
    <property type="match status" value="1"/>
</dbReference>
<comment type="subcellular location">
    <subcellularLocation>
        <location>Secreted</location>
        <location>Cell wall</location>
    </subcellularLocation>
    <subcellularLocation>
        <location evidence="3">Cell outer membrane</location>
        <topology evidence="3">Peripheral membrane protein</topology>
        <orientation evidence="3">Extracellular side</orientation>
    </subcellularLocation>
</comment>
<comment type="developmental stage">
    <text>Elementary body.</text>
</comment>
<comment type="similarity">
    <text evidence="3">Belongs to the PMP outer membrane protein family.</text>
</comment>
<reference key="1">
    <citation type="journal article" date="1998" name="Science">
        <title>Genome sequence of an obligate intracellular pathogen of humans: Chlamydia trachomatis.</title>
        <authorList>
            <person name="Stephens R.S."/>
            <person name="Kalman S."/>
            <person name="Lammel C.J."/>
            <person name="Fan J."/>
            <person name="Marathe R."/>
            <person name="Aravind L."/>
            <person name="Mitchell W.P."/>
            <person name="Olinger L."/>
            <person name="Tatusov R.L."/>
            <person name="Zhao Q."/>
            <person name="Koonin E.V."/>
            <person name="Davis R.W."/>
        </authorList>
    </citation>
    <scope>NUCLEOTIDE SEQUENCE [LARGE SCALE GENOMIC DNA]</scope>
    <source>
        <strain>ATCC VR-885 / DSM 19411 / UW-3/Cx</strain>
    </source>
</reference>
<proteinExistence type="evidence at transcript level"/>
<sequence length="1016" mass="107905">MPFSLRSTSFCFLACLCSYSYGFASSPQVLTPNVTTPFKGDDVYLNGDCAFVNVYAGAENGSIISANGDNLTITGQNHTLSFTDSQGPVLQNYAFISAGETLTLKDFSSLMFSKNVSCGEKGMISGKTVSISGAGEVIFWDNSVGYSPLSIVPASTPTPPAPAPAPAASSSLSPTVSDARKGSIFSVETSLEISGVKKGVMFDNNAGNFGTVFRGNSNNNAGSGGSGSATTPSFTVKNCKGKVSFTDNVASCGGGVVYKGTVLFKDNEGGIFFRGNTAYDDLGILAATSRDQNTETGGGGGVICSPDDSVKFEGNKGSIVFDYNFAKGRGGSILTKEFSLVADDSVVFSNNTAEKGGGAIYAPTIDISTNGGSILFERNRAAEGGAICVSEASSGSTGNLTLSASDGDIVFSGNMTSDRPGERSAARILSDGTTVSLNASGLSKLIFYDPVVQNNSAAGASTPSPSSSSMPGAVTINQSGNGSVIFTAESLTPSEKLQVLNSTSNFPGALTVSGGELVVTEGATLTTGTITATSGRVTLGSGASLSAVAGAANNNYTCTVSKLGIDLESFLTPNYKTAILGADGTVTVNSGSTLDLVMESEAEVYDNPLFVGSLTIPFVTLSSSSASNGVTKNSVTINDADAAHYGYQGSWSADWTKPPLAPDAKGMVPPNTNNTLYLTWRPASNYGEYRLDPQRKGELVPNSLWVAGSALRTFTNGLKEHYVSRDVGFVASLHALGDYILNYTQDDRDGFLARYGGFQATAASHYENGSIFGVAFGQLYGQTKSRMYYSKDAGNMTMLSCFGRSYVDIKGTETVMYWETAYGYSVHRMHTQYFNDKTQKFDHSKCHWHNNNYYAFVGAEHNFLEYCIPTRQFARDYELTGFMRFEMAGGWSSSTRETGSLTRYFARGSGHNMSLPIGIVAHAVSHVRRSPPSKLTLNMGYRPDIWRVTPHCNMEIIANGVKTPIQGSPLARHAFFLEVHDTLYIHHFGRAYMNYSLDARRRQTAHFVSMGLNRIF</sequence>
<feature type="signal peptide" evidence="1">
    <location>
        <begin position="1"/>
        <end position="24"/>
    </location>
</feature>
<feature type="chain" id="PRO_0000024731" description="Probable outer membrane protein PmpH">
    <location>
        <begin position="25"/>
        <end position="1016"/>
    </location>
</feature>
<feature type="domain" description="Autotransporter" evidence="2">
    <location>
        <begin position="697"/>
        <end position="1016"/>
    </location>
</feature>
<evidence type="ECO:0000255" key="1"/>
<evidence type="ECO:0000255" key="2">
    <source>
        <dbReference type="PROSITE-ProRule" id="PRU00556"/>
    </source>
</evidence>
<evidence type="ECO:0000305" key="3"/>
<protein>
    <recommendedName>
        <fullName>Probable outer membrane protein PmpH</fullName>
    </recommendedName>
    <alternativeName>
        <fullName>Polymorphic membrane protein H</fullName>
    </alternativeName>
</protein>
<accession>O84880</accession>